<sequence>MLRPGALRLRGLALRGSPRRPSSAGLREGQESPASPPEWKDRAETVIIGGGCVGVSLAYHLAKAGMRDVVLMEKSELTAGSTWHAAGLTTYFHPGINLKKIHYDSIKLYERLEEETGQVVGFHQPGSIRLATTPVRVDEFKYQMTRTNWHATEQYIIEPEKIHELFPLLNMNKILAGLYNPGDGHIDPYSLTMALAAGARKYGALLKYPAPVTSLKPRPDGTWDVETPQGSVRANRIVNAAGFWAREVGKMIGLDHPLIPVQHQYVVTSTIPEVKALKRELPVLRDLEGSYYLRQERDGLLFGPYESQEKMKLQASWVTHGVPPGFGKELFESDLDRISDHLEAAMEMIPVLKKADIINVVNGPITYSPDILPMVGPHQGVRNYWVATGFGYGIIHAGGVGKFLSDWILHGEPPFDLIELDPNRYGKWTTTQYTEAKARESYGFNNIVGYPKEERFAGRPTQRVSGLYKTLKSKCSMGFHAGWEQPHWFYKPGQDTQYRPSFRRTNWFEPVGSEYKQVMQRVGVIDLSPFGKFNIKGRDSTQLLDHLFANVIPKVGFTNISHMLTPRGRVYAELTVSQQSPGEFLLITGSGSELHDLRWIEEAAFRGGYDVEIQNITDEFGVLGVAGPYARRVLQKLTSEDLSDDAFKFLQTKSFNISDIPVTAIRISYTGELGWELYHRREDSATLYERIMSAGQEEGIGDFGTYALNALRLEKAFRAWGSEMNCDTNPLEAGLEYFVKLNKPADFIGKQALKQIKTEGLKRRLVCLTVATDDVDPEGNESIWYKGKVVGNTTSGSYSYSIQKSLAFAYVPVQLSEVGQQVEVELLGKNYPATIIQEPLVLTEPARARLQKDGKKTNLEKGPSRTTKL</sequence>
<comment type="function">
    <text evidence="1">Catalyzes the demethylation of N,N-dimethylglycine to sarcosine. Also has activity with sarcosine in vitro.</text>
</comment>
<comment type="catalytic activity">
    <reaction evidence="1">
        <text>(6S)-5,6,7,8-tetrahydrofolyl-(gamma-L-Glu)(n) + N,N-dimethylglycine + oxidized [electron-transfer flavoprotein] + H(+) = (6R)-5,10-methylenetetrahydrofolyl-(gamma-L-Glu)(n) + sarcosine + reduced [electron-transfer flavoprotein]</text>
        <dbReference type="Rhea" id="RHEA:52856"/>
        <dbReference type="Rhea" id="RHEA-COMP:10685"/>
        <dbReference type="Rhea" id="RHEA-COMP:10686"/>
        <dbReference type="Rhea" id="RHEA-COMP:13257"/>
        <dbReference type="Rhea" id="RHEA-COMP:14738"/>
        <dbReference type="ChEBI" id="CHEBI:15378"/>
        <dbReference type="ChEBI" id="CHEBI:57433"/>
        <dbReference type="ChEBI" id="CHEBI:57692"/>
        <dbReference type="ChEBI" id="CHEBI:58251"/>
        <dbReference type="ChEBI" id="CHEBI:58307"/>
        <dbReference type="ChEBI" id="CHEBI:136572"/>
        <dbReference type="ChEBI" id="CHEBI:141005"/>
        <dbReference type="EC" id="1.5.8.4"/>
    </reaction>
</comment>
<comment type="cofactor">
    <cofactor evidence="1">
        <name>FAD</name>
        <dbReference type="ChEBI" id="CHEBI:57692"/>
    </cofactor>
    <text evidence="1">Binds 1 FAD covalently per monomer.</text>
</comment>
<comment type="pathway">
    <text>Amine and polyamine degradation; betaine degradation; sarcosine from betaine: step 2/2.</text>
</comment>
<comment type="subcellular location">
    <subcellularLocation>
        <location evidence="1">Mitochondrion</location>
    </subcellularLocation>
</comment>
<comment type="similarity">
    <text evidence="4">Belongs to the GcvT family.</text>
</comment>
<reference key="1">
    <citation type="journal article" date="2005" name="Science">
        <title>The transcriptional landscape of the mammalian genome.</title>
        <authorList>
            <person name="Carninci P."/>
            <person name="Kasukawa T."/>
            <person name="Katayama S."/>
            <person name="Gough J."/>
            <person name="Frith M.C."/>
            <person name="Maeda N."/>
            <person name="Oyama R."/>
            <person name="Ravasi T."/>
            <person name="Lenhard B."/>
            <person name="Wells C."/>
            <person name="Kodzius R."/>
            <person name="Shimokawa K."/>
            <person name="Bajic V.B."/>
            <person name="Brenner S.E."/>
            <person name="Batalov S."/>
            <person name="Forrest A.R."/>
            <person name="Zavolan M."/>
            <person name="Davis M.J."/>
            <person name="Wilming L.G."/>
            <person name="Aidinis V."/>
            <person name="Allen J.E."/>
            <person name="Ambesi-Impiombato A."/>
            <person name="Apweiler R."/>
            <person name="Aturaliya R.N."/>
            <person name="Bailey T.L."/>
            <person name="Bansal M."/>
            <person name="Baxter L."/>
            <person name="Beisel K.W."/>
            <person name="Bersano T."/>
            <person name="Bono H."/>
            <person name="Chalk A.M."/>
            <person name="Chiu K.P."/>
            <person name="Choudhary V."/>
            <person name="Christoffels A."/>
            <person name="Clutterbuck D.R."/>
            <person name="Crowe M.L."/>
            <person name="Dalla E."/>
            <person name="Dalrymple B.P."/>
            <person name="de Bono B."/>
            <person name="Della Gatta G."/>
            <person name="di Bernardo D."/>
            <person name="Down T."/>
            <person name="Engstrom P."/>
            <person name="Fagiolini M."/>
            <person name="Faulkner G."/>
            <person name="Fletcher C.F."/>
            <person name="Fukushima T."/>
            <person name="Furuno M."/>
            <person name="Futaki S."/>
            <person name="Gariboldi M."/>
            <person name="Georgii-Hemming P."/>
            <person name="Gingeras T.R."/>
            <person name="Gojobori T."/>
            <person name="Green R.E."/>
            <person name="Gustincich S."/>
            <person name="Harbers M."/>
            <person name="Hayashi Y."/>
            <person name="Hensch T.K."/>
            <person name="Hirokawa N."/>
            <person name="Hill D."/>
            <person name="Huminiecki L."/>
            <person name="Iacono M."/>
            <person name="Ikeo K."/>
            <person name="Iwama A."/>
            <person name="Ishikawa T."/>
            <person name="Jakt M."/>
            <person name="Kanapin A."/>
            <person name="Katoh M."/>
            <person name="Kawasawa Y."/>
            <person name="Kelso J."/>
            <person name="Kitamura H."/>
            <person name="Kitano H."/>
            <person name="Kollias G."/>
            <person name="Krishnan S.P."/>
            <person name="Kruger A."/>
            <person name="Kummerfeld S.K."/>
            <person name="Kurochkin I.V."/>
            <person name="Lareau L.F."/>
            <person name="Lazarevic D."/>
            <person name="Lipovich L."/>
            <person name="Liu J."/>
            <person name="Liuni S."/>
            <person name="McWilliam S."/>
            <person name="Madan Babu M."/>
            <person name="Madera M."/>
            <person name="Marchionni L."/>
            <person name="Matsuda H."/>
            <person name="Matsuzawa S."/>
            <person name="Miki H."/>
            <person name="Mignone F."/>
            <person name="Miyake S."/>
            <person name="Morris K."/>
            <person name="Mottagui-Tabar S."/>
            <person name="Mulder N."/>
            <person name="Nakano N."/>
            <person name="Nakauchi H."/>
            <person name="Ng P."/>
            <person name="Nilsson R."/>
            <person name="Nishiguchi S."/>
            <person name="Nishikawa S."/>
            <person name="Nori F."/>
            <person name="Ohara O."/>
            <person name="Okazaki Y."/>
            <person name="Orlando V."/>
            <person name="Pang K.C."/>
            <person name="Pavan W.J."/>
            <person name="Pavesi G."/>
            <person name="Pesole G."/>
            <person name="Petrovsky N."/>
            <person name="Piazza S."/>
            <person name="Reed J."/>
            <person name="Reid J.F."/>
            <person name="Ring B.Z."/>
            <person name="Ringwald M."/>
            <person name="Rost B."/>
            <person name="Ruan Y."/>
            <person name="Salzberg S.L."/>
            <person name="Sandelin A."/>
            <person name="Schneider C."/>
            <person name="Schoenbach C."/>
            <person name="Sekiguchi K."/>
            <person name="Semple C.A."/>
            <person name="Seno S."/>
            <person name="Sessa L."/>
            <person name="Sheng Y."/>
            <person name="Shibata Y."/>
            <person name="Shimada H."/>
            <person name="Shimada K."/>
            <person name="Silva D."/>
            <person name="Sinclair B."/>
            <person name="Sperling S."/>
            <person name="Stupka E."/>
            <person name="Sugiura K."/>
            <person name="Sultana R."/>
            <person name="Takenaka Y."/>
            <person name="Taki K."/>
            <person name="Tammoja K."/>
            <person name="Tan S.L."/>
            <person name="Tang S."/>
            <person name="Taylor M.S."/>
            <person name="Tegner J."/>
            <person name="Teichmann S.A."/>
            <person name="Ueda H.R."/>
            <person name="van Nimwegen E."/>
            <person name="Verardo R."/>
            <person name="Wei C.L."/>
            <person name="Yagi K."/>
            <person name="Yamanishi H."/>
            <person name="Zabarovsky E."/>
            <person name="Zhu S."/>
            <person name="Zimmer A."/>
            <person name="Hide W."/>
            <person name="Bult C."/>
            <person name="Grimmond S.M."/>
            <person name="Teasdale R.D."/>
            <person name="Liu E.T."/>
            <person name="Brusic V."/>
            <person name="Quackenbush J."/>
            <person name="Wahlestedt C."/>
            <person name="Mattick J.S."/>
            <person name="Hume D.A."/>
            <person name="Kai C."/>
            <person name="Sasaki D."/>
            <person name="Tomaru Y."/>
            <person name="Fukuda S."/>
            <person name="Kanamori-Katayama M."/>
            <person name="Suzuki M."/>
            <person name="Aoki J."/>
            <person name="Arakawa T."/>
            <person name="Iida J."/>
            <person name="Imamura K."/>
            <person name="Itoh M."/>
            <person name="Kato T."/>
            <person name="Kawaji H."/>
            <person name="Kawagashira N."/>
            <person name="Kawashima T."/>
            <person name="Kojima M."/>
            <person name="Kondo S."/>
            <person name="Konno H."/>
            <person name="Nakano K."/>
            <person name="Ninomiya N."/>
            <person name="Nishio T."/>
            <person name="Okada M."/>
            <person name="Plessy C."/>
            <person name="Shibata K."/>
            <person name="Shiraki T."/>
            <person name="Suzuki S."/>
            <person name="Tagami M."/>
            <person name="Waki K."/>
            <person name="Watahiki A."/>
            <person name="Okamura-Oho Y."/>
            <person name="Suzuki H."/>
            <person name="Kawai J."/>
            <person name="Hayashizaki Y."/>
        </authorList>
    </citation>
    <scope>NUCLEOTIDE SEQUENCE [LARGE SCALE MRNA]</scope>
    <source>
        <strain>C57BL/6J</strain>
        <tissue>Lung</tissue>
    </source>
</reference>
<reference key="2">
    <citation type="journal article" date="2009" name="PLoS Biol.">
        <title>Lineage-specific biology revealed by a finished genome assembly of the mouse.</title>
        <authorList>
            <person name="Church D.M."/>
            <person name="Goodstadt L."/>
            <person name="Hillier L.W."/>
            <person name="Zody M.C."/>
            <person name="Goldstein S."/>
            <person name="She X."/>
            <person name="Bult C.J."/>
            <person name="Agarwala R."/>
            <person name="Cherry J.L."/>
            <person name="DiCuccio M."/>
            <person name="Hlavina W."/>
            <person name="Kapustin Y."/>
            <person name="Meric P."/>
            <person name="Maglott D."/>
            <person name="Birtle Z."/>
            <person name="Marques A.C."/>
            <person name="Graves T."/>
            <person name="Zhou S."/>
            <person name="Teague B."/>
            <person name="Potamousis K."/>
            <person name="Churas C."/>
            <person name="Place M."/>
            <person name="Herschleb J."/>
            <person name="Runnheim R."/>
            <person name="Forrest D."/>
            <person name="Amos-Landgraf J."/>
            <person name="Schwartz D.C."/>
            <person name="Cheng Z."/>
            <person name="Lindblad-Toh K."/>
            <person name="Eichler E.E."/>
            <person name="Ponting C.P."/>
        </authorList>
    </citation>
    <scope>NUCLEOTIDE SEQUENCE [LARGE SCALE GENOMIC DNA]</scope>
    <source>
        <strain>C57BL/6J</strain>
    </source>
</reference>
<reference key="3">
    <citation type="journal article" date="2004" name="Genome Res.">
        <title>The status, quality, and expansion of the NIH full-length cDNA project: the Mammalian Gene Collection (MGC).</title>
        <authorList>
            <consortium name="The MGC Project Team"/>
        </authorList>
    </citation>
    <scope>NUCLEOTIDE SEQUENCE [LARGE SCALE MRNA] OF 237-869</scope>
    <source>
        <tissue>Liver</tissue>
    </source>
</reference>
<reference key="4">
    <citation type="journal article" date="2010" name="Cell">
        <title>A tissue-specific atlas of mouse protein phosphorylation and expression.</title>
        <authorList>
            <person name="Huttlin E.L."/>
            <person name="Jedrychowski M.P."/>
            <person name="Elias J.E."/>
            <person name="Goswami T."/>
            <person name="Rad R."/>
            <person name="Beausoleil S.A."/>
            <person name="Villen J."/>
            <person name="Haas W."/>
            <person name="Sowa M.E."/>
            <person name="Gygi S.P."/>
        </authorList>
    </citation>
    <scope>IDENTIFICATION BY MASS SPECTROMETRY [LARGE SCALE ANALYSIS]</scope>
    <source>
        <tissue>Kidney</tissue>
        <tissue>Liver</tissue>
    </source>
</reference>
<reference key="5">
    <citation type="journal article" date="2013" name="Mol. Cell">
        <title>SIRT5-mediated lysine desuccinylation impacts diverse metabolic pathways.</title>
        <authorList>
            <person name="Park J."/>
            <person name="Chen Y."/>
            <person name="Tishkoff D.X."/>
            <person name="Peng C."/>
            <person name="Tan M."/>
            <person name="Dai L."/>
            <person name="Xie Z."/>
            <person name="Zhang Y."/>
            <person name="Zwaans B.M."/>
            <person name="Skinner M.E."/>
            <person name="Lombard D.B."/>
            <person name="Zhao Y."/>
        </authorList>
    </citation>
    <scope>SUCCINYLATION [LARGE SCALE ANALYSIS] AT LYS-141; LYS-310; LYS-312; LYS-427; LYS-469; LYS-516; LYS-648; LYS-786 AND LYS-788</scope>
    <scope>IDENTIFICATION BY MASS SPECTROMETRY [LARGE SCALE ANALYSIS]</scope>
    <source>
        <tissue>Liver</tissue>
    </source>
</reference>
<reference key="6">
    <citation type="journal article" date="2013" name="Proc. Natl. Acad. Sci. U.S.A.">
        <title>Label-free quantitative proteomics of the lysine acetylome in mitochondria identifies substrates of SIRT3 in metabolic pathways.</title>
        <authorList>
            <person name="Rardin M.J."/>
            <person name="Newman J.C."/>
            <person name="Held J.M."/>
            <person name="Cusack M.P."/>
            <person name="Sorensen D.J."/>
            <person name="Li B."/>
            <person name="Schilling B."/>
            <person name="Mooney S.D."/>
            <person name="Kahn C.R."/>
            <person name="Verdin E."/>
            <person name="Gibson B.W."/>
        </authorList>
    </citation>
    <scope>ACETYLATION [LARGE SCALE ANALYSIS] AT LYS-107; LYS-141; LYS-161; LYS-216; LYS-328; LYS-353; LYS-427; LYS-469; LYS-516; LYS-648; LYS-757 AND LYS-786</scope>
    <scope>IDENTIFICATION BY MASS SPECTROMETRY [LARGE SCALE ANALYSIS]</scope>
    <source>
        <tissue>Liver</tissue>
    </source>
</reference>
<protein>
    <recommendedName>
        <fullName>Dimethylglycine dehydrogenase, mitochondrial</fullName>
        <ecNumber evidence="1">1.5.8.4</ecNumber>
    </recommendedName>
    <alternativeName>
        <fullName>ME2GLYDH</fullName>
    </alternativeName>
</protein>
<name>M2GD_MOUSE</name>
<gene>
    <name type="primary">Dmgdh</name>
</gene>
<keyword id="KW-0007">Acetylation</keyword>
<keyword id="KW-0274">FAD</keyword>
<keyword id="KW-0285">Flavoprotein</keyword>
<keyword id="KW-0496">Mitochondrion</keyword>
<keyword id="KW-0560">Oxidoreductase</keyword>
<keyword id="KW-1185">Reference proteome</keyword>
<keyword id="KW-0809">Transit peptide</keyword>
<accession>Q9DBT9</accession>
<accession>B1B1D0</accession>
<accession>Q8R1S7</accession>
<proteinExistence type="evidence at protein level"/>
<evidence type="ECO:0000250" key="1">
    <source>
        <dbReference type="UniProtKB" id="Q63342"/>
    </source>
</evidence>
<evidence type="ECO:0000255" key="2"/>
<evidence type="ECO:0000256" key="3">
    <source>
        <dbReference type="SAM" id="MobiDB-lite"/>
    </source>
</evidence>
<evidence type="ECO:0000305" key="4"/>
<evidence type="ECO:0007744" key="5">
    <source>
    </source>
</evidence>
<evidence type="ECO:0007744" key="6">
    <source>
    </source>
</evidence>
<feature type="transit peptide" description="Mitochondrion" evidence="2">
    <location>
        <begin position="1"/>
        <end position="43"/>
    </location>
</feature>
<feature type="chain" id="PRO_0000010768" description="Dimethylglycine dehydrogenase, mitochondrial">
    <location>
        <begin position="44"/>
        <end position="869"/>
    </location>
</feature>
<feature type="region of interest" description="Disordered" evidence="3">
    <location>
        <begin position="14"/>
        <end position="39"/>
    </location>
</feature>
<feature type="binding site" evidence="1">
    <location>
        <begin position="52"/>
        <end position="53"/>
    </location>
    <ligand>
        <name>FAD</name>
        <dbReference type="ChEBI" id="CHEBI:57692"/>
    </ligand>
</feature>
<feature type="binding site" evidence="1">
    <location>
        <begin position="73"/>
        <end position="74"/>
    </location>
    <ligand>
        <name>FAD</name>
        <dbReference type="ChEBI" id="CHEBI:57692"/>
    </ligand>
</feature>
<feature type="binding site" evidence="1">
    <location>
        <begin position="80"/>
        <end position="88"/>
    </location>
    <ligand>
        <name>FAD</name>
        <dbReference type="ChEBI" id="CHEBI:57692"/>
    </ligand>
</feature>
<feature type="binding site" evidence="1">
    <location>
        <position position="212"/>
    </location>
    <ligand>
        <name>FAD</name>
        <dbReference type="ChEBI" id="CHEBI:57692"/>
    </ligand>
</feature>
<feature type="binding site" evidence="1">
    <location>
        <position position="244"/>
    </location>
    <ligand>
        <name>FAD</name>
        <dbReference type="ChEBI" id="CHEBI:57692"/>
    </ligand>
</feature>
<feature type="binding site" evidence="1">
    <location>
        <begin position="390"/>
        <end position="395"/>
    </location>
    <ligand>
        <name>FAD</name>
        <dbReference type="ChEBI" id="CHEBI:57692"/>
    </ligand>
</feature>
<feature type="binding site" evidence="1">
    <location>
        <begin position="573"/>
        <end position="575"/>
    </location>
    <ligand>
        <name>(6S)-5,6,7,8-tetrahydrofolate</name>
        <dbReference type="ChEBI" id="CHEBI:57453"/>
    </ligand>
</feature>
<feature type="binding site" evidence="1">
    <location>
        <position position="669"/>
    </location>
    <ligand>
        <name>(6S)-5,6,7,8-tetrahydrofolate</name>
        <dbReference type="ChEBI" id="CHEBI:57453"/>
    </ligand>
</feature>
<feature type="binding site" evidence="1">
    <location>
        <begin position="676"/>
        <end position="678"/>
    </location>
    <ligand>
        <name>(6S)-5,6,7,8-tetrahydrofolate</name>
        <dbReference type="ChEBI" id="CHEBI:57453"/>
    </ligand>
</feature>
<feature type="binding site" evidence="1">
    <location>
        <position position="737"/>
    </location>
    <ligand>
        <name>(6S)-5,6,7,8-tetrahydrofolate</name>
        <dbReference type="ChEBI" id="CHEBI:57453"/>
    </ligand>
</feature>
<feature type="modified residue" description="Tele-8alpha-FAD histidine" evidence="1">
    <location>
        <position position="84"/>
    </location>
</feature>
<feature type="modified residue" description="N6-acetyllysine" evidence="5">
    <location>
        <position position="107"/>
    </location>
</feature>
<feature type="modified residue" description="N6-acetyllysine; alternate" evidence="5">
    <location>
        <position position="141"/>
    </location>
</feature>
<feature type="modified residue" description="N6-succinyllysine; alternate" evidence="6">
    <location>
        <position position="141"/>
    </location>
</feature>
<feature type="modified residue" description="N6-acetyllysine" evidence="5">
    <location>
        <position position="161"/>
    </location>
</feature>
<feature type="modified residue" description="N6-acetyllysine" evidence="5">
    <location>
        <position position="216"/>
    </location>
</feature>
<feature type="modified residue" description="N6-succinyllysine" evidence="6">
    <location>
        <position position="310"/>
    </location>
</feature>
<feature type="modified residue" description="N6-succinyllysine" evidence="6">
    <location>
        <position position="312"/>
    </location>
</feature>
<feature type="modified residue" description="N6-acetyllysine" evidence="5">
    <location>
        <position position="328"/>
    </location>
</feature>
<feature type="modified residue" description="N6-acetyllysine" evidence="5">
    <location>
        <position position="353"/>
    </location>
</feature>
<feature type="modified residue" description="N6-acetyllysine; alternate" evidence="5">
    <location>
        <position position="427"/>
    </location>
</feature>
<feature type="modified residue" description="N6-succinyllysine; alternate" evidence="6">
    <location>
        <position position="427"/>
    </location>
</feature>
<feature type="modified residue" description="N6-acetyllysine; alternate" evidence="5">
    <location>
        <position position="469"/>
    </location>
</feature>
<feature type="modified residue" description="N6-succinyllysine; alternate" evidence="6">
    <location>
        <position position="469"/>
    </location>
</feature>
<feature type="modified residue" description="N6-acetyllysine; alternate" evidence="5">
    <location>
        <position position="516"/>
    </location>
</feature>
<feature type="modified residue" description="N6-succinyllysine; alternate" evidence="6">
    <location>
        <position position="516"/>
    </location>
</feature>
<feature type="modified residue" description="N6-acetyllysine; alternate" evidence="5">
    <location>
        <position position="648"/>
    </location>
</feature>
<feature type="modified residue" description="N6-succinyllysine; alternate" evidence="6">
    <location>
        <position position="648"/>
    </location>
</feature>
<feature type="modified residue" description="N6-acetyllysine" evidence="5">
    <location>
        <position position="757"/>
    </location>
</feature>
<feature type="modified residue" description="N6-acetyllysine; alternate" evidence="5">
    <location>
        <position position="786"/>
    </location>
</feature>
<feature type="modified residue" description="N6-succinyllysine; alternate" evidence="6">
    <location>
        <position position="786"/>
    </location>
</feature>
<feature type="modified residue" description="N6-succinyllysine" evidence="6">
    <location>
        <position position="788"/>
    </location>
</feature>
<feature type="sequence conflict" description="In Ref. 3; AAH24126." evidence="4" ref="3">
    <original>T</original>
    <variation>A</variation>
    <location>
        <position position="758"/>
    </location>
</feature>
<organism>
    <name type="scientific">Mus musculus</name>
    <name type="common">Mouse</name>
    <dbReference type="NCBI Taxonomy" id="10090"/>
    <lineage>
        <taxon>Eukaryota</taxon>
        <taxon>Metazoa</taxon>
        <taxon>Chordata</taxon>
        <taxon>Craniata</taxon>
        <taxon>Vertebrata</taxon>
        <taxon>Euteleostomi</taxon>
        <taxon>Mammalia</taxon>
        <taxon>Eutheria</taxon>
        <taxon>Euarchontoglires</taxon>
        <taxon>Glires</taxon>
        <taxon>Rodentia</taxon>
        <taxon>Myomorpha</taxon>
        <taxon>Muroidea</taxon>
        <taxon>Muridae</taxon>
        <taxon>Murinae</taxon>
        <taxon>Mus</taxon>
        <taxon>Mus</taxon>
    </lineage>
</organism>
<dbReference type="EC" id="1.5.8.4" evidence="1"/>
<dbReference type="EMBL" id="AK004755">
    <property type="protein sequence ID" value="BAB23536.1"/>
    <property type="molecule type" value="mRNA"/>
</dbReference>
<dbReference type="EMBL" id="AC131739">
    <property type="status" value="NOT_ANNOTATED_CDS"/>
    <property type="molecule type" value="Genomic_DNA"/>
</dbReference>
<dbReference type="EMBL" id="CT030023">
    <property type="status" value="NOT_ANNOTATED_CDS"/>
    <property type="molecule type" value="Genomic_DNA"/>
</dbReference>
<dbReference type="EMBL" id="BC024126">
    <property type="protein sequence ID" value="AAH24126.1"/>
    <property type="molecule type" value="mRNA"/>
</dbReference>
<dbReference type="CCDS" id="CCDS26690.1"/>
<dbReference type="RefSeq" id="NP_083048.1">
    <property type="nucleotide sequence ID" value="NM_028772.3"/>
</dbReference>
<dbReference type="SMR" id="Q9DBT9"/>
<dbReference type="FunCoup" id="Q9DBT9">
    <property type="interactions" value="454"/>
</dbReference>
<dbReference type="STRING" id="10090.ENSMUSP00000039663"/>
<dbReference type="GlyGen" id="Q9DBT9">
    <property type="glycosylation" value="1 site, 1 O-linked glycan (1 site)"/>
</dbReference>
<dbReference type="iPTMnet" id="Q9DBT9"/>
<dbReference type="PhosphoSitePlus" id="Q9DBT9"/>
<dbReference type="SwissPalm" id="Q9DBT9"/>
<dbReference type="jPOST" id="Q9DBT9"/>
<dbReference type="PaxDb" id="10090-ENSMUSP00000039663"/>
<dbReference type="PeptideAtlas" id="Q9DBT9"/>
<dbReference type="ProteomicsDB" id="252697"/>
<dbReference type="Antibodypedia" id="48453">
    <property type="antibodies" value="183 antibodies from 26 providers"/>
</dbReference>
<dbReference type="DNASU" id="74129"/>
<dbReference type="Ensembl" id="ENSMUST00000048001.8">
    <property type="protein sequence ID" value="ENSMUSP00000039663.7"/>
    <property type="gene ID" value="ENSMUSG00000042102.8"/>
</dbReference>
<dbReference type="GeneID" id="74129"/>
<dbReference type="KEGG" id="mmu:74129"/>
<dbReference type="UCSC" id="uc007rll.1">
    <property type="organism name" value="mouse"/>
</dbReference>
<dbReference type="AGR" id="MGI:1921379"/>
<dbReference type="CTD" id="29958"/>
<dbReference type="MGI" id="MGI:1921379">
    <property type="gene designation" value="Dmgdh"/>
</dbReference>
<dbReference type="VEuPathDB" id="HostDB:ENSMUSG00000042102"/>
<dbReference type="eggNOG" id="KOG2844">
    <property type="taxonomic scope" value="Eukaryota"/>
</dbReference>
<dbReference type="GeneTree" id="ENSGT00940000158176"/>
<dbReference type="HOGENOM" id="CLU_007884_11_1_1"/>
<dbReference type="InParanoid" id="Q9DBT9"/>
<dbReference type="OMA" id="NGWERPN"/>
<dbReference type="OrthoDB" id="498204at2759"/>
<dbReference type="PhylomeDB" id="Q9DBT9"/>
<dbReference type="TreeFam" id="TF314735"/>
<dbReference type="BRENDA" id="1.5.8.4">
    <property type="organism ID" value="3474"/>
</dbReference>
<dbReference type="Reactome" id="R-MMU-6798163">
    <property type="pathway name" value="Choline catabolism"/>
</dbReference>
<dbReference type="UniPathway" id="UPA00291">
    <property type="reaction ID" value="UER00433"/>
</dbReference>
<dbReference type="BioGRID-ORCS" id="74129">
    <property type="hits" value="2 hits in 77 CRISPR screens"/>
</dbReference>
<dbReference type="ChiTaRS" id="Dmgdh">
    <property type="organism name" value="mouse"/>
</dbReference>
<dbReference type="PRO" id="PR:Q9DBT9"/>
<dbReference type="Proteomes" id="UP000000589">
    <property type="component" value="Chromosome 13"/>
</dbReference>
<dbReference type="RNAct" id="Q9DBT9">
    <property type="molecule type" value="protein"/>
</dbReference>
<dbReference type="Bgee" id="ENSMUSG00000042102">
    <property type="expression patterns" value="Expressed in left lobe of liver and 55 other cell types or tissues"/>
</dbReference>
<dbReference type="GO" id="GO:0005739">
    <property type="term" value="C:mitochondrion"/>
    <property type="evidence" value="ECO:0007005"/>
    <property type="project" value="MGI"/>
</dbReference>
<dbReference type="GO" id="GO:0047865">
    <property type="term" value="F:dimethylglycine dehydrogenase activity"/>
    <property type="evidence" value="ECO:0007669"/>
    <property type="project" value="UniProtKB-EC"/>
</dbReference>
<dbReference type="GO" id="GO:0006579">
    <property type="term" value="P:amino-acid betaine catabolic process"/>
    <property type="evidence" value="ECO:0007669"/>
    <property type="project" value="UniProtKB-UniPathway"/>
</dbReference>
<dbReference type="GO" id="GO:0042426">
    <property type="term" value="P:choline catabolic process"/>
    <property type="evidence" value="ECO:0007669"/>
    <property type="project" value="Ensembl"/>
</dbReference>
<dbReference type="FunFam" id="3.30.70.1400:FF:000005">
    <property type="entry name" value="Dimethylglycine dehydrogenase, mitochondrial"/>
    <property type="match status" value="1"/>
</dbReference>
<dbReference type="FunFam" id="2.40.30.110:FF:000005">
    <property type="entry name" value="dimethylglycine dehydrogenase, mitochondrial"/>
    <property type="match status" value="1"/>
</dbReference>
<dbReference type="Gene3D" id="2.40.30.110">
    <property type="entry name" value="Aminomethyltransferase beta-barrel domains"/>
    <property type="match status" value="1"/>
</dbReference>
<dbReference type="Gene3D" id="3.30.70.1400">
    <property type="entry name" value="Aminomethyltransferase beta-barrel domains"/>
    <property type="match status" value="1"/>
</dbReference>
<dbReference type="Gene3D" id="3.30.9.10">
    <property type="entry name" value="D-Amino Acid Oxidase, subunit A, domain 2"/>
    <property type="match status" value="1"/>
</dbReference>
<dbReference type="Gene3D" id="3.50.50.60">
    <property type="entry name" value="FAD/NAD(P)-binding domain"/>
    <property type="match status" value="1"/>
</dbReference>
<dbReference type="Gene3D" id="3.30.1360.120">
    <property type="entry name" value="Probable tRNA modification gtpase trme, domain 1"/>
    <property type="match status" value="1"/>
</dbReference>
<dbReference type="InterPro" id="IPR006076">
    <property type="entry name" value="FAD-dep_OxRdtase"/>
</dbReference>
<dbReference type="InterPro" id="IPR036188">
    <property type="entry name" value="FAD/NAD-bd_sf"/>
</dbReference>
<dbReference type="InterPro" id="IPR032503">
    <property type="entry name" value="FAO_M"/>
</dbReference>
<dbReference type="InterPro" id="IPR013977">
    <property type="entry name" value="GCST_C"/>
</dbReference>
<dbReference type="InterPro" id="IPR006222">
    <property type="entry name" value="GCV_T_N"/>
</dbReference>
<dbReference type="InterPro" id="IPR028896">
    <property type="entry name" value="GcvT/YgfZ/DmdA"/>
</dbReference>
<dbReference type="InterPro" id="IPR029043">
    <property type="entry name" value="GcvT/YgfZ_C"/>
</dbReference>
<dbReference type="InterPro" id="IPR027266">
    <property type="entry name" value="TrmE/GcvT_dom1"/>
</dbReference>
<dbReference type="PANTHER" id="PTHR43757">
    <property type="entry name" value="AMINOMETHYLTRANSFERASE"/>
    <property type="match status" value="1"/>
</dbReference>
<dbReference type="PANTHER" id="PTHR43757:SF2">
    <property type="entry name" value="AMINOMETHYLTRANSFERASE, MITOCHONDRIAL"/>
    <property type="match status" value="1"/>
</dbReference>
<dbReference type="Pfam" id="PF01266">
    <property type="entry name" value="DAO"/>
    <property type="match status" value="1"/>
</dbReference>
<dbReference type="Pfam" id="PF16350">
    <property type="entry name" value="FAO_M"/>
    <property type="match status" value="1"/>
</dbReference>
<dbReference type="Pfam" id="PF01571">
    <property type="entry name" value="GCV_T"/>
    <property type="match status" value="1"/>
</dbReference>
<dbReference type="Pfam" id="PF08669">
    <property type="entry name" value="GCV_T_C"/>
    <property type="match status" value="1"/>
</dbReference>
<dbReference type="SUPFAM" id="SSF101790">
    <property type="entry name" value="Aminomethyltransferase beta-barrel domain"/>
    <property type="match status" value="1"/>
</dbReference>
<dbReference type="SUPFAM" id="SSF54373">
    <property type="entry name" value="FAD-linked reductases, C-terminal domain"/>
    <property type="match status" value="1"/>
</dbReference>
<dbReference type="SUPFAM" id="SSF51905">
    <property type="entry name" value="FAD/NAD(P)-binding domain"/>
    <property type="match status" value="1"/>
</dbReference>
<dbReference type="SUPFAM" id="SSF103025">
    <property type="entry name" value="Folate-binding domain"/>
    <property type="match status" value="1"/>
</dbReference>